<dbReference type="EMBL" id="AE001437">
    <property type="protein sequence ID" value="AAK79725.1"/>
    <property type="molecule type" value="Genomic_DNA"/>
</dbReference>
<dbReference type="PIR" id="B97117">
    <property type="entry name" value="B97117"/>
</dbReference>
<dbReference type="RefSeq" id="NP_348385.1">
    <property type="nucleotide sequence ID" value="NC_003030.1"/>
</dbReference>
<dbReference type="RefSeq" id="WP_010965066.1">
    <property type="nucleotide sequence ID" value="NC_003030.1"/>
</dbReference>
<dbReference type="SMR" id="Q97I93"/>
<dbReference type="STRING" id="272562.CA_C1759"/>
<dbReference type="GeneID" id="44998254"/>
<dbReference type="KEGG" id="cac:CA_C1759"/>
<dbReference type="PATRIC" id="fig|272562.8.peg.1963"/>
<dbReference type="eggNOG" id="COG0335">
    <property type="taxonomic scope" value="Bacteria"/>
</dbReference>
<dbReference type="HOGENOM" id="CLU_103507_2_2_9"/>
<dbReference type="OrthoDB" id="9803541at2"/>
<dbReference type="Proteomes" id="UP000000814">
    <property type="component" value="Chromosome"/>
</dbReference>
<dbReference type="GO" id="GO:0022625">
    <property type="term" value="C:cytosolic large ribosomal subunit"/>
    <property type="evidence" value="ECO:0007669"/>
    <property type="project" value="TreeGrafter"/>
</dbReference>
<dbReference type="GO" id="GO:0003735">
    <property type="term" value="F:structural constituent of ribosome"/>
    <property type="evidence" value="ECO:0007669"/>
    <property type="project" value="InterPro"/>
</dbReference>
<dbReference type="GO" id="GO:0006412">
    <property type="term" value="P:translation"/>
    <property type="evidence" value="ECO:0007669"/>
    <property type="project" value="UniProtKB-UniRule"/>
</dbReference>
<dbReference type="FunFam" id="2.30.30.790:FF:000001">
    <property type="entry name" value="50S ribosomal protein L19"/>
    <property type="match status" value="1"/>
</dbReference>
<dbReference type="Gene3D" id="2.30.30.790">
    <property type="match status" value="1"/>
</dbReference>
<dbReference type="HAMAP" id="MF_00402">
    <property type="entry name" value="Ribosomal_bL19"/>
    <property type="match status" value="1"/>
</dbReference>
<dbReference type="InterPro" id="IPR001857">
    <property type="entry name" value="Ribosomal_bL19"/>
</dbReference>
<dbReference type="InterPro" id="IPR018257">
    <property type="entry name" value="Ribosomal_bL19_CS"/>
</dbReference>
<dbReference type="InterPro" id="IPR038657">
    <property type="entry name" value="Ribosomal_bL19_sf"/>
</dbReference>
<dbReference type="InterPro" id="IPR008991">
    <property type="entry name" value="Translation_prot_SH3-like_sf"/>
</dbReference>
<dbReference type="NCBIfam" id="TIGR01024">
    <property type="entry name" value="rplS_bact"/>
    <property type="match status" value="1"/>
</dbReference>
<dbReference type="PANTHER" id="PTHR15680:SF9">
    <property type="entry name" value="LARGE RIBOSOMAL SUBUNIT PROTEIN BL19M"/>
    <property type="match status" value="1"/>
</dbReference>
<dbReference type="PANTHER" id="PTHR15680">
    <property type="entry name" value="RIBOSOMAL PROTEIN L19"/>
    <property type="match status" value="1"/>
</dbReference>
<dbReference type="Pfam" id="PF01245">
    <property type="entry name" value="Ribosomal_L19"/>
    <property type="match status" value="1"/>
</dbReference>
<dbReference type="PIRSF" id="PIRSF002191">
    <property type="entry name" value="Ribosomal_L19"/>
    <property type="match status" value="1"/>
</dbReference>
<dbReference type="PRINTS" id="PR00061">
    <property type="entry name" value="RIBOSOMALL19"/>
</dbReference>
<dbReference type="SUPFAM" id="SSF50104">
    <property type="entry name" value="Translation proteins SH3-like domain"/>
    <property type="match status" value="1"/>
</dbReference>
<dbReference type="PROSITE" id="PS01015">
    <property type="entry name" value="RIBOSOMAL_L19"/>
    <property type="match status" value="1"/>
</dbReference>
<reference key="1">
    <citation type="journal article" date="2001" name="J. Bacteriol.">
        <title>Genome sequence and comparative analysis of the solvent-producing bacterium Clostridium acetobutylicum.</title>
        <authorList>
            <person name="Noelling J."/>
            <person name="Breton G."/>
            <person name="Omelchenko M.V."/>
            <person name="Makarova K.S."/>
            <person name="Zeng Q."/>
            <person name="Gibson R."/>
            <person name="Lee H.M."/>
            <person name="Dubois J."/>
            <person name="Qiu D."/>
            <person name="Hitti J."/>
            <person name="Wolf Y.I."/>
            <person name="Tatusov R.L."/>
            <person name="Sabathe F."/>
            <person name="Doucette-Stamm L.A."/>
            <person name="Soucaille P."/>
            <person name="Daly M.J."/>
            <person name="Bennett G.N."/>
            <person name="Koonin E.V."/>
            <person name="Smith D.R."/>
        </authorList>
    </citation>
    <scope>NUCLEOTIDE SEQUENCE [LARGE SCALE GENOMIC DNA]</scope>
    <source>
        <strain>ATCC 824 / DSM 792 / JCM 1419 / IAM 19013 / LMG 5710 / NBRC 13948 / NRRL B-527 / VKM B-1787 / 2291 / W</strain>
    </source>
</reference>
<name>RL19_CLOAB</name>
<proteinExistence type="inferred from homology"/>
<gene>
    <name evidence="1" type="primary">rplS</name>
    <name type="ordered locus">CA_C1759</name>
</gene>
<keyword id="KW-1185">Reference proteome</keyword>
<keyword id="KW-0687">Ribonucleoprotein</keyword>
<keyword id="KW-0689">Ribosomal protein</keyword>
<evidence type="ECO:0000255" key="1">
    <source>
        <dbReference type="HAMAP-Rule" id="MF_00402"/>
    </source>
</evidence>
<evidence type="ECO:0000305" key="2"/>
<sequence>MLDVIKEIEAEQIRTDLPSFNVGDTVRIEVRIKEGEKERLQAFEGTVIKRQNGGLRETFTVRRVAYGVGVERTFPLNAPVIAGLKVVRRGKVRRAKLYYLRDRVGKAAKVKEIR</sequence>
<accession>Q97I93</accession>
<comment type="function">
    <text evidence="1">This protein is located at the 30S-50S ribosomal subunit interface and may play a role in the structure and function of the aminoacyl-tRNA binding site.</text>
</comment>
<comment type="similarity">
    <text evidence="1">Belongs to the bacterial ribosomal protein bL19 family.</text>
</comment>
<feature type="chain" id="PRO_0000163441" description="Large ribosomal subunit protein bL19">
    <location>
        <begin position="1"/>
        <end position="114"/>
    </location>
</feature>
<protein>
    <recommendedName>
        <fullName evidence="1">Large ribosomal subunit protein bL19</fullName>
    </recommendedName>
    <alternativeName>
        <fullName evidence="2">50S ribosomal protein L19</fullName>
    </alternativeName>
</protein>
<organism>
    <name type="scientific">Clostridium acetobutylicum (strain ATCC 824 / DSM 792 / JCM 1419 / IAM 19013 / LMG 5710 / NBRC 13948 / NRRL B-527 / VKM B-1787 / 2291 / W)</name>
    <dbReference type="NCBI Taxonomy" id="272562"/>
    <lineage>
        <taxon>Bacteria</taxon>
        <taxon>Bacillati</taxon>
        <taxon>Bacillota</taxon>
        <taxon>Clostridia</taxon>
        <taxon>Eubacteriales</taxon>
        <taxon>Clostridiaceae</taxon>
        <taxon>Clostridium</taxon>
    </lineage>
</organism>